<proteinExistence type="evidence at transcript level"/>
<organism>
    <name type="scientific">Drosophila melanogaster</name>
    <name type="common">Fruit fly</name>
    <dbReference type="NCBI Taxonomy" id="7227"/>
    <lineage>
        <taxon>Eukaryota</taxon>
        <taxon>Metazoa</taxon>
        <taxon>Ecdysozoa</taxon>
        <taxon>Arthropoda</taxon>
        <taxon>Hexapoda</taxon>
        <taxon>Insecta</taxon>
        <taxon>Pterygota</taxon>
        <taxon>Neoptera</taxon>
        <taxon>Endopterygota</taxon>
        <taxon>Diptera</taxon>
        <taxon>Brachycera</taxon>
        <taxon>Muscomorpha</taxon>
        <taxon>Ephydroidea</taxon>
        <taxon>Drosophilidae</taxon>
        <taxon>Drosophila</taxon>
        <taxon>Sophophora</taxon>
    </lineage>
</organism>
<dbReference type="EC" id="3.1.1.-"/>
<dbReference type="EMBL" id="Y14366">
    <property type="protein sequence ID" value="CAA74736.1"/>
    <property type="status" value="ALT_INIT"/>
    <property type="molecule type" value="mRNA"/>
</dbReference>
<dbReference type="EMBL" id="AE014134">
    <property type="protein sequence ID" value="AAF52994.1"/>
    <property type="molecule type" value="Genomic_DNA"/>
</dbReference>
<dbReference type="EMBL" id="AY075506">
    <property type="protein sequence ID" value="AAL68315.1"/>
    <property type="molecule type" value="mRNA"/>
</dbReference>
<dbReference type="RefSeq" id="NP_001285811.1">
    <property type="nucleotide sequence ID" value="NM_001298882.1"/>
</dbReference>
<dbReference type="RefSeq" id="NP_523540.1">
    <property type="nucleotide sequence ID" value="NM_078816.4"/>
</dbReference>
<dbReference type="SMR" id="O46107"/>
<dbReference type="FunCoup" id="O46107">
    <property type="interactions" value="13"/>
</dbReference>
<dbReference type="STRING" id="7227.FBpp0079713"/>
<dbReference type="ESTHER" id="drome-lip1">
    <property type="family name" value="Acidic_Lipase"/>
</dbReference>
<dbReference type="MEROPS" id="S33.A88"/>
<dbReference type="GlyCosmos" id="O46107">
    <property type="glycosylation" value="5 sites, No reported glycans"/>
</dbReference>
<dbReference type="GlyGen" id="O46107">
    <property type="glycosylation" value="5 sites"/>
</dbReference>
<dbReference type="PaxDb" id="7227-FBpp0079713"/>
<dbReference type="DNASU" id="43973"/>
<dbReference type="EnsemblMetazoa" id="FBtr0080124">
    <property type="protein sequence ID" value="FBpp0079713"/>
    <property type="gene ID" value="FBgn0023496"/>
</dbReference>
<dbReference type="EnsemblMetazoa" id="FBtr0340248">
    <property type="protein sequence ID" value="FBpp0309221"/>
    <property type="gene ID" value="FBgn0023496"/>
</dbReference>
<dbReference type="GeneID" id="43973"/>
<dbReference type="KEGG" id="dme:Dmel_CG7279"/>
<dbReference type="AGR" id="FB:FBgn0023496"/>
<dbReference type="CTD" id="43973"/>
<dbReference type="FlyBase" id="FBgn0023496">
    <property type="gene designation" value="Lip1"/>
</dbReference>
<dbReference type="VEuPathDB" id="VectorBase:FBgn0023496"/>
<dbReference type="eggNOG" id="KOG2624">
    <property type="taxonomic scope" value="Eukaryota"/>
</dbReference>
<dbReference type="HOGENOM" id="CLU_010974_0_3_1"/>
<dbReference type="InParanoid" id="O46107"/>
<dbReference type="OMA" id="LCVFINR"/>
<dbReference type="OrthoDB" id="9974421at2759"/>
<dbReference type="PhylomeDB" id="O46107"/>
<dbReference type="BioGRID-ORCS" id="43973">
    <property type="hits" value="0 hits in 3 CRISPR screens"/>
</dbReference>
<dbReference type="GenomeRNAi" id="43973"/>
<dbReference type="PRO" id="PR:O46107"/>
<dbReference type="Proteomes" id="UP000000803">
    <property type="component" value="Chromosome 2L"/>
</dbReference>
<dbReference type="Bgee" id="FBgn0023496">
    <property type="expression patterns" value="Expressed in embryonic/larval dorsal branch (Drosophila) and 12 other cell types or tissues"/>
</dbReference>
<dbReference type="ExpressionAtlas" id="O46107">
    <property type="expression patterns" value="baseline and differential"/>
</dbReference>
<dbReference type="GO" id="GO:0005576">
    <property type="term" value="C:extracellular region"/>
    <property type="evidence" value="ECO:0000303"/>
    <property type="project" value="UniProtKB"/>
</dbReference>
<dbReference type="GO" id="GO:0004806">
    <property type="term" value="F:triacylglycerol lipase activity"/>
    <property type="evidence" value="ECO:0000250"/>
    <property type="project" value="FlyBase"/>
</dbReference>
<dbReference type="GO" id="GO:0007586">
    <property type="term" value="P:digestion"/>
    <property type="evidence" value="ECO:0000270"/>
    <property type="project" value="UniProtKB"/>
</dbReference>
<dbReference type="GO" id="GO:0016042">
    <property type="term" value="P:lipid catabolic process"/>
    <property type="evidence" value="ECO:0007669"/>
    <property type="project" value="UniProtKB-KW"/>
</dbReference>
<dbReference type="FunFam" id="3.40.50.1820:FF:000057">
    <property type="entry name" value="Lipase"/>
    <property type="match status" value="1"/>
</dbReference>
<dbReference type="Gene3D" id="3.40.50.1820">
    <property type="entry name" value="alpha/beta hydrolase"/>
    <property type="match status" value="1"/>
</dbReference>
<dbReference type="InterPro" id="IPR029058">
    <property type="entry name" value="AB_hydrolase_fold"/>
</dbReference>
<dbReference type="InterPro" id="IPR006693">
    <property type="entry name" value="AB_hydrolase_lipase"/>
</dbReference>
<dbReference type="InterPro" id="IPR025483">
    <property type="entry name" value="Lipase_euk"/>
</dbReference>
<dbReference type="PANTHER" id="PTHR11005">
    <property type="entry name" value="LYSOSOMAL ACID LIPASE-RELATED"/>
    <property type="match status" value="1"/>
</dbReference>
<dbReference type="Pfam" id="PF04083">
    <property type="entry name" value="Abhydro_lipase"/>
    <property type="match status" value="1"/>
</dbReference>
<dbReference type="PIRSF" id="PIRSF000862">
    <property type="entry name" value="Steryl_ester_lip"/>
    <property type="match status" value="1"/>
</dbReference>
<dbReference type="SUPFAM" id="SSF53474">
    <property type="entry name" value="alpha/beta-Hydrolases"/>
    <property type="match status" value="1"/>
</dbReference>
<gene>
    <name type="primary">Lip1</name>
    <name type="ORF">CG7279</name>
</gene>
<reference key="1">
    <citation type="journal article" date="1998" name="J. Mol. Biol.">
        <title>The Drosophila melanogaster lipase homologs: a gene family with tissue and developmental specific expression.</title>
        <authorList>
            <person name="Pistillo D."/>
            <person name="Manzi A."/>
            <person name="Tino A."/>
            <person name="Pilo Boyl P."/>
            <person name="Graziani F."/>
            <person name="Malva C."/>
        </authorList>
    </citation>
    <scope>NUCLEOTIDE SEQUENCE [MRNA]</scope>
    <scope>FUNCTION</scope>
    <scope>TISSUE SPECIFICITY</scope>
    <scope>DEVELOPMENTAL STAGE</scope>
    <source>
        <strain>Canton-S</strain>
    </source>
</reference>
<reference key="2">
    <citation type="journal article" date="2000" name="Science">
        <title>The genome sequence of Drosophila melanogaster.</title>
        <authorList>
            <person name="Adams M.D."/>
            <person name="Celniker S.E."/>
            <person name="Holt R.A."/>
            <person name="Evans C.A."/>
            <person name="Gocayne J.D."/>
            <person name="Amanatides P.G."/>
            <person name="Scherer S.E."/>
            <person name="Li P.W."/>
            <person name="Hoskins R.A."/>
            <person name="Galle R.F."/>
            <person name="George R.A."/>
            <person name="Lewis S.E."/>
            <person name="Richards S."/>
            <person name="Ashburner M."/>
            <person name="Henderson S.N."/>
            <person name="Sutton G.G."/>
            <person name="Wortman J.R."/>
            <person name="Yandell M.D."/>
            <person name="Zhang Q."/>
            <person name="Chen L.X."/>
            <person name="Brandon R.C."/>
            <person name="Rogers Y.-H.C."/>
            <person name="Blazej R.G."/>
            <person name="Champe M."/>
            <person name="Pfeiffer B.D."/>
            <person name="Wan K.H."/>
            <person name="Doyle C."/>
            <person name="Baxter E.G."/>
            <person name="Helt G."/>
            <person name="Nelson C.R."/>
            <person name="Miklos G.L.G."/>
            <person name="Abril J.F."/>
            <person name="Agbayani A."/>
            <person name="An H.-J."/>
            <person name="Andrews-Pfannkoch C."/>
            <person name="Baldwin D."/>
            <person name="Ballew R.M."/>
            <person name="Basu A."/>
            <person name="Baxendale J."/>
            <person name="Bayraktaroglu L."/>
            <person name="Beasley E.M."/>
            <person name="Beeson K.Y."/>
            <person name="Benos P.V."/>
            <person name="Berman B.P."/>
            <person name="Bhandari D."/>
            <person name="Bolshakov S."/>
            <person name="Borkova D."/>
            <person name="Botchan M.R."/>
            <person name="Bouck J."/>
            <person name="Brokstein P."/>
            <person name="Brottier P."/>
            <person name="Burtis K.C."/>
            <person name="Busam D.A."/>
            <person name="Butler H."/>
            <person name="Cadieu E."/>
            <person name="Center A."/>
            <person name="Chandra I."/>
            <person name="Cherry J.M."/>
            <person name="Cawley S."/>
            <person name="Dahlke C."/>
            <person name="Davenport L.B."/>
            <person name="Davies P."/>
            <person name="de Pablos B."/>
            <person name="Delcher A."/>
            <person name="Deng Z."/>
            <person name="Mays A.D."/>
            <person name="Dew I."/>
            <person name="Dietz S.M."/>
            <person name="Dodson K."/>
            <person name="Doup L.E."/>
            <person name="Downes M."/>
            <person name="Dugan-Rocha S."/>
            <person name="Dunkov B.C."/>
            <person name="Dunn P."/>
            <person name="Durbin K.J."/>
            <person name="Evangelista C.C."/>
            <person name="Ferraz C."/>
            <person name="Ferriera S."/>
            <person name="Fleischmann W."/>
            <person name="Fosler C."/>
            <person name="Gabrielian A.E."/>
            <person name="Garg N.S."/>
            <person name="Gelbart W.M."/>
            <person name="Glasser K."/>
            <person name="Glodek A."/>
            <person name="Gong F."/>
            <person name="Gorrell J.H."/>
            <person name="Gu Z."/>
            <person name="Guan P."/>
            <person name="Harris M."/>
            <person name="Harris N.L."/>
            <person name="Harvey D.A."/>
            <person name="Heiman T.J."/>
            <person name="Hernandez J.R."/>
            <person name="Houck J."/>
            <person name="Hostin D."/>
            <person name="Houston K.A."/>
            <person name="Howland T.J."/>
            <person name="Wei M.-H."/>
            <person name="Ibegwam C."/>
            <person name="Jalali M."/>
            <person name="Kalush F."/>
            <person name="Karpen G.H."/>
            <person name="Ke Z."/>
            <person name="Kennison J.A."/>
            <person name="Ketchum K.A."/>
            <person name="Kimmel B.E."/>
            <person name="Kodira C.D."/>
            <person name="Kraft C.L."/>
            <person name="Kravitz S."/>
            <person name="Kulp D."/>
            <person name="Lai Z."/>
            <person name="Lasko P."/>
            <person name="Lei Y."/>
            <person name="Levitsky A.A."/>
            <person name="Li J.H."/>
            <person name="Li Z."/>
            <person name="Liang Y."/>
            <person name="Lin X."/>
            <person name="Liu X."/>
            <person name="Mattei B."/>
            <person name="McIntosh T.C."/>
            <person name="McLeod M.P."/>
            <person name="McPherson D."/>
            <person name="Merkulov G."/>
            <person name="Milshina N.V."/>
            <person name="Mobarry C."/>
            <person name="Morris J."/>
            <person name="Moshrefi A."/>
            <person name="Mount S.M."/>
            <person name="Moy M."/>
            <person name="Murphy B."/>
            <person name="Murphy L."/>
            <person name="Muzny D.M."/>
            <person name="Nelson D.L."/>
            <person name="Nelson D.R."/>
            <person name="Nelson K.A."/>
            <person name="Nixon K."/>
            <person name="Nusskern D.R."/>
            <person name="Pacleb J.M."/>
            <person name="Palazzolo M."/>
            <person name="Pittman G.S."/>
            <person name="Pan S."/>
            <person name="Pollard J."/>
            <person name="Puri V."/>
            <person name="Reese M.G."/>
            <person name="Reinert K."/>
            <person name="Remington K."/>
            <person name="Saunders R.D.C."/>
            <person name="Scheeler F."/>
            <person name="Shen H."/>
            <person name="Shue B.C."/>
            <person name="Siden-Kiamos I."/>
            <person name="Simpson M."/>
            <person name="Skupski M.P."/>
            <person name="Smith T.J."/>
            <person name="Spier E."/>
            <person name="Spradling A.C."/>
            <person name="Stapleton M."/>
            <person name="Strong R."/>
            <person name="Sun E."/>
            <person name="Svirskas R."/>
            <person name="Tector C."/>
            <person name="Turner R."/>
            <person name="Venter E."/>
            <person name="Wang A.H."/>
            <person name="Wang X."/>
            <person name="Wang Z.-Y."/>
            <person name="Wassarman D.A."/>
            <person name="Weinstock G.M."/>
            <person name="Weissenbach J."/>
            <person name="Williams S.M."/>
            <person name="Woodage T."/>
            <person name="Worley K.C."/>
            <person name="Wu D."/>
            <person name="Yang S."/>
            <person name="Yao Q.A."/>
            <person name="Ye J."/>
            <person name="Yeh R.-F."/>
            <person name="Zaveri J.S."/>
            <person name="Zhan M."/>
            <person name="Zhang G."/>
            <person name="Zhao Q."/>
            <person name="Zheng L."/>
            <person name="Zheng X.H."/>
            <person name="Zhong F.N."/>
            <person name="Zhong W."/>
            <person name="Zhou X."/>
            <person name="Zhu S.C."/>
            <person name="Zhu X."/>
            <person name="Smith H.O."/>
            <person name="Gibbs R.A."/>
            <person name="Myers E.W."/>
            <person name="Rubin G.M."/>
            <person name="Venter J.C."/>
        </authorList>
    </citation>
    <scope>NUCLEOTIDE SEQUENCE [LARGE SCALE GENOMIC DNA]</scope>
    <source>
        <strain>Berkeley</strain>
    </source>
</reference>
<reference key="3">
    <citation type="journal article" date="2002" name="Genome Biol.">
        <title>Annotation of the Drosophila melanogaster euchromatic genome: a systematic review.</title>
        <authorList>
            <person name="Misra S."/>
            <person name="Crosby M.A."/>
            <person name="Mungall C.J."/>
            <person name="Matthews B.B."/>
            <person name="Campbell K.S."/>
            <person name="Hradecky P."/>
            <person name="Huang Y."/>
            <person name="Kaminker J.S."/>
            <person name="Millburn G.H."/>
            <person name="Prochnik S.E."/>
            <person name="Smith C.D."/>
            <person name="Tupy J.L."/>
            <person name="Whitfield E.J."/>
            <person name="Bayraktaroglu L."/>
            <person name="Berman B.P."/>
            <person name="Bettencourt B.R."/>
            <person name="Celniker S.E."/>
            <person name="de Grey A.D.N.J."/>
            <person name="Drysdale R.A."/>
            <person name="Harris N.L."/>
            <person name="Richter J."/>
            <person name="Russo S."/>
            <person name="Schroeder A.J."/>
            <person name="Shu S.Q."/>
            <person name="Stapleton M."/>
            <person name="Yamada C."/>
            <person name="Ashburner M."/>
            <person name="Gelbart W.M."/>
            <person name="Rubin G.M."/>
            <person name="Lewis S.E."/>
        </authorList>
    </citation>
    <scope>GENOME REANNOTATION</scope>
    <source>
        <strain>Berkeley</strain>
    </source>
</reference>
<reference key="4">
    <citation type="journal article" date="2002" name="Genome Biol.">
        <title>A Drosophila full-length cDNA resource.</title>
        <authorList>
            <person name="Stapleton M."/>
            <person name="Carlson J.W."/>
            <person name="Brokstein P."/>
            <person name="Yu C."/>
            <person name="Champe M."/>
            <person name="George R.A."/>
            <person name="Guarin H."/>
            <person name="Kronmiller B."/>
            <person name="Pacleb J.M."/>
            <person name="Park S."/>
            <person name="Wan K.H."/>
            <person name="Rubin G.M."/>
            <person name="Celniker S.E."/>
        </authorList>
    </citation>
    <scope>NUCLEOTIDE SEQUENCE [LARGE SCALE MRNA]</scope>
    <source>
        <strain>Berkeley</strain>
        <tissue>Embryo</tissue>
    </source>
</reference>
<name>LIP1_DROME</name>
<evidence type="ECO:0000250" key="1"/>
<evidence type="ECO:0000255" key="2"/>
<evidence type="ECO:0000256" key="3">
    <source>
        <dbReference type="SAM" id="MobiDB-lite"/>
    </source>
</evidence>
<evidence type="ECO:0000269" key="4">
    <source>
    </source>
</evidence>
<evidence type="ECO:0000305" key="5"/>
<accession>O46107</accession>
<accession>Q9VKR6</accession>
<keyword id="KW-0325">Glycoprotein</keyword>
<keyword id="KW-0378">Hydrolase</keyword>
<keyword id="KW-0442">Lipid degradation</keyword>
<keyword id="KW-0443">Lipid metabolism</keyword>
<keyword id="KW-1185">Reference proteome</keyword>
<keyword id="KW-0964">Secreted</keyword>
<keyword id="KW-0732">Signal</keyword>
<sequence>MRCSLRMQLLLLLGLCVFISRIQGQLIGGEEDEEDEEEEEEEEESVEDETPEDRLQRKNIKQDSTLSVDKLIAKYGYESEVHHVTTEDGYILTMHRIRKQGAPPFLLQHGLVDSSAGFVVMGPNVSLAYLLADHNYDVWLGNARGNRYSRNHTTLDPDESKFWDFSWHEIGMYDLPAMIDHVLKVTGFPKLHYAGHSQGCTSFFVMCSMRPAYNDKVVSMQALAPAVYAKETEDHPYIRAISLYFNSLVGSSIREMFNGEFRFLCRMTEETERLCIEAVFGIVGRNWNEFNRKMFPVILGHYPAGVAAKQVKHFIQIIKSGRFAPYSYSSNKNMQLYRDHLPPRYNLSLVTVPTFVYYSTNDLLCHPKDVESMCDDLGNVTGKYLVPQKEFNHMDFLWAIDVRKMLYRRMLQVLGKVPEGSPEEANRSRREIRGKFIRS</sequence>
<comment type="function">
    <text evidence="4">Could be a digestive enzyme.</text>
</comment>
<comment type="subcellular location">
    <subcellularLocation>
        <location evidence="5">Secreted</location>
    </subcellularLocation>
</comment>
<comment type="tissue specificity">
    <text evidence="4">In 14 hours embryos expression is seen in the foregut/midgut boundary.</text>
</comment>
<comment type="developmental stage">
    <text evidence="4">Expressed from 14 hours embryos through to adulthood. There is a weak maternal contribution to early embryos.</text>
</comment>
<comment type="similarity">
    <text evidence="5">Belongs to the AB hydrolase superfamily. Lipase family.</text>
</comment>
<comment type="caution">
    <text evidence="5">It is uncertain whether Met-1 or Met-7 is the initiator.</text>
</comment>
<comment type="sequence caution" evidence="5">
    <conflict type="erroneous initiation">
        <sequence resource="EMBL-CDS" id="CAA74736"/>
    </conflict>
</comment>
<protein>
    <recommendedName>
        <fullName>Lipase 1</fullName>
        <shortName>DmLip1</shortName>
        <ecNumber>3.1.1.-</ecNumber>
    </recommendedName>
</protein>
<feature type="signal peptide" evidence="2">
    <location>
        <begin position="1"/>
        <end position="24"/>
    </location>
</feature>
<feature type="chain" id="PRO_0000017810" description="Lipase 1">
    <location>
        <begin position="25"/>
        <end position="439"/>
    </location>
</feature>
<feature type="region of interest" description="Disordered" evidence="3">
    <location>
        <begin position="28"/>
        <end position="60"/>
    </location>
</feature>
<feature type="compositionally biased region" description="Acidic residues" evidence="3">
    <location>
        <begin position="29"/>
        <end position="51"/>
    </location>
</feature>
<feature type="active site" description="Charge relay system" evidence="1">
    <location>
        <position position="197"/>
    </location>
</feature>
<feature type="active site" description="Charge relay system" evidence="1">
    <location>
        <position position="393"/>
    </location>
</feature>
<feature type="glycosylation site" description="N-linked (GlcNAc...) asparagine" evidence="2">
    <location>
        <position position="124"/>
    </location>
</feature>
<feature type="glycosylation site" description="N-linked (GlcNAc...) asparagine" evidence="2">
    <location>
        <position position="151"/>
    </location>
</feature>
<feature type="glycosylation site" description="N-linked (GlcNAc...) asparagine" evidence="2">
    <location>
        <position position="346"/>
    </location>
</feature>
<feature type="glycosylation site" description="N-linked (GlcNAc...) asparagine" evidence="2">
    <location>
        <position position="379"/>
    </location>
</feature>
<feature type="glycosylation site" description="N-linked (GlcNAc...) asparagine" evidence="2">
    <location>
        <position position="426"/>
    </location>
</feature>
<feature type="sequence conflict" description="In Ref. 1; CAA74736." evidence="5" ref="1">
    <original>L</original>
    <variation>I</variation>
    <location>
        <position position="10"/>
    </location>
</feature>
<feature type="sequence conflict" description="In Ref. 1; CAA74736." evidence="5" ref="1">
    <original>Y</original>
    <variation>F</variation>
    <location>
        <position position="213"/>
    </location>
</feature>
<feature type="sequence conflict" description="In Ref. 1; CAA74736." evidence="5" ref="1">
    <original>Q</original>
    <variation>E</variation>
    <location>
        <position position="412"/>
    </location>
</feature>